<evidence type="ECO:0000255" key="1">
    <source>
        <dbReference type="HAMAP-Rule" id="MF_00339"/>
    </source>
</evidence>
<evidence type="ECO:0000305" key="2"/>
<comment type="function">
    <text evidence="1">Catalyzes the phosphorylation of D-fructose 6-phosphate to fructose 1,6-bisphosphate by ATP, the first committing step of glycolysis.</text>
</comment>
<comment type="catalytic activity">
    <reaction evidence="1">
        <text>beta-D-fructose 6-phosphate + ATP = beta-D-fructose 1,6-bisphosphate + ADP + H(+)</text>
        <dbReference type="Rhea" id="RHEA:16109"/>
        <dbReference type="ChEBI" id="CHEBI:15378"/>
        <dbReference type="ChEBI" id="CHEBI:30616"/>
        <dbReference type="ChEBI" id="CHEBI:32966"/>
        <dbReference type="ChEBI" id="CHEBI:57634"/>
        <dbReference type="ChEBI" id="CHEBI:456216"/>
        <dbReference type="EC" id="2.7.1.11"/>
    </reaction>
</comment>
<comment type="cofactor">
    <cofactor evidence="1">
        <name>Mg(2+)</name>
        <dbReference type="ChEBI" id="CHEBI:18420"/>
    </cofactor>
</comment>
<comment type="activity regulation">
    <text evidence="1">Allosterically activated by ADP and other diphosphonucleosides, and allosterically inhibited by phosphoenolpyruvate.</text>
</comment>
<comment type="pathway">
    <text evidence="1">Carbohydrate degradation; glycolysis; D-glyceraldehyde 3-phosphate and glycerone phosphate from D-glucose: step 3/4.</text>
</comment>
<comment type="subunit">
    <text evidence="1">Homotetramer.</text>
</comment>
<comment type="subcellular location">
    <subcellularLocation>
        <location evidence="1">Cytoplasm</location>
    </subcellularLocation>
</comment>
<comment type="similarity">
    <text evidence="1">Belongs to the phosphofructokinase type A (PFKA) family. ATP-dependent PFK group I subfamily. Prokaryotic clade 'B1' sub-subfamily.</text>
</comment>
<comment type="sequence caution" evidence="2">
    <conflict type="erroneous initiation">
        <sequence resource="EMBL-CDS" id="AAO04973"/>
    </conflict>
</comment>
<feature type="chain" id="PRO_0000111982" description="ATP-dependent 6-phosphofructokinase">
    <location>
        <begin position="1"/>
        <end position="322"/>
    </location>
</feature>
<feature type="active site" description="Proton acceptor" evidence="1">
    <location>
        <position position="129"/>
    </location>
</feature>
<feature type="binding site" evidence="1">
    <location>
        <position position="11"/>
    </location>
    <ligand>
        <name>ATP</name>
        <dbReference type="ChEBI" id="CHEBI:30616"/>
    </ligand>
</feature>
<feature type="binding site" evidence="1">
    <location>
        <begin position="21"/>
        <end position="25"/>
    </location>
    <ligand>
        <name>ADP</name>
        <dbReference type="ChEBI" id="CHEBI:456216"/>
        <note>allosteric activator; ligand shared between dimeric partners</note>
    </ligand>
</feature>
<feature type="binding site" evidence="1">
    <location>
        <begin position="72"/>
        <end position="73"/>
    </location>
    <ligand>
        <name>ATP</name>
        <dbReference type="ChEBI" id="CHEBI:30616"/>
    </ligand>
</feature>
<feature type="binding site" evidence="1">
    <location>
        <begin position="102"/>
        <end position="105"/>
    </location>
    <ligand>
        <name>ATP</name>
        <dbReference type="ChEBI" id="CHEBI:30616"/>
    </ligand>
</feature>
<feature type="binding site" evidence="1">
    <location>
        <position position="103"/>
    </location>
    <ligand>
        <name>Mg(2+)</name>
        <dbReference type="ChEBI" id="CHEBI:18420"/>
        <note>catalytic</note>
    </ligand>
</feature>
<feature type="binding site" description="in other chain" evidence="1">
    <location>
        <begin position="127"/>
        <end position="129"/>
    </location>
    <ligand>
        <name>substrate</name>
        <note>ligand shared between dimeric partners</note>
    </ligand>
</feature>
<feature type="binding site" description="in other chain" evidence="1">
    <location>
        <position position="156"/>
    </location>
    <ligand>
        <name>ADP</name>
        <dbReference type="ChEBI" id="CHEBI:456216"/>
        <note>allosteric activator; ligand shared between dimeric partners</note>
    </ligand>
</feature>
<feature type="binding site" evidence="1">
    <location>
        <position position="164"/>
    </location>
    <ligand>
        <name>substrate</name>
        <note>ligand shared between dimeric partners</note>
    </ligand>
</feature>
<feature type="binding site" description="in other chain" evidence="1">
    <location>
        <begin position="171"/>
        <end position="173"/>
    </location>
    <ligand>
        <name>substrate</name>
        <note>ligand shared between dimeric partners</note>
    </ligand>
</feature>
<feature type="binding site" description="in other chain" evidence="1">
    <location>
        <begin position="187"/>
        <end position="189"/>
    </location>
    <ligand>
        <name>ADP</name>
        <dbReference type="ChEBI" id="CHEBI:456216"/>
        <note>allosteric activator; ligand shared between dimeric partners</note>
    </ligand>
</feature>
<feature type="binding site" description="in other chain" evidence="1">
    <location>
        <position position="213"/>
    </location>
    <ligand>
        <name>ADP</name>
        <dbReference type="ChEBI" id="CHEBI:456216"/>
        <note>allosteric activator; ligand shared between dimeric partners</note>
    </ligand>
</feature>
<feature type="binding site" description="in other chain" evidence="1">
    <location>
        <begin position="215"/>
        <end position="217"/>
    </location>
    <ligand>
        <name>ADP</name>
        <dbReference type="ChEBI" id="CHEBI:456216"/>
        <note>allosteric activator; ligand shared between dimeric partners</note>
    </ligand>
</feature>
<feature type="binding site" description="in other chain" evidence="1">
    <location>
        <position position="224"/>
    </location>
    <ligand>
        <name>substrate</name>
        <note>ligand shared between dimeric partners</note>
    </ligand>
</feature>
<feature type="binding site" evidence="1">
    <location>
        <position position="245"/>
    </location>
    <ligand>
        <name>substrate</name>
        <note>ligand shared between dimeric partners</note>
    </ligand>
</feature>
<feature type="binding site" description="in other chain" evidence="1">
    <location>
        <begin position="251"/>
        <end position="254"/>
    </location>
    <ligand>
        <name>substrate</name>
        <note>ligand shared between dimeric partners</note>
    </ligand>
</feature>
<protein>
    <recommendedName>
        <fullName evidence="1">ATP-dependent 6-phosphofructokinase</fullName>
        <shortName evidence="1">ATP-PFK</shortName>
        <shortName evidence="1">Phosphofructokinase</shortName>
        <ecNumber evidence="1">2.7.1.11</ecNumber>
    </recommendedName>
    <alternativeName>
        <fullName evidence="1">Phosphohexokinase</fullName>
    </alternativeName>
</protein>
<dbReference type="EC" id="2.7.1.11" evidence="1"/>
<dbReference type="EMBL" id="AE015929">
    <property type="protein sequence ID" value="AAO04973.1"/>
    <property type="status" value="ALT_INIT"/>
    <property type="molecule type" value="Genomic_DNA"/>
</dbReference>
<dbReference type="RefSeq" id="NP_764929.1">
    <property type="nucleotide sequence ID" value="NC_004461.1"/>
</dbReference>
<dbReference type="RefSeq" id="WP_002440192.1">
    <property type="nucleotide sequence ID" value="NZ_WBME01000042.1"/>
</dbReference>
<dbReference type="SMR" id="Q8CS68"/>
<dbReference type="GeneID" id="50018512"/>
<dbReference type="KEGG" id="sep:SE_1374"/>
<dbReference type="PATRIC" id="fig|176280.10.peg.1342"/>
<dbReference type="eggNOG" id="COG0205">
    <property type="taxonomic scope" value="Bacteria"/>
</dbReference>
<dbReference type="HOGENOM" id="CLU_020655_0_1_9"/>
<dbReference type="OrthoDB" id="9802503at2"/>
<dbReference type="UniPathway" id="UPA00109">
    <property type="reaction ID" value="UER00182"/>
</dbReference>
<dbReference type="Proteomes" id="UP000001411">
    <property type="component" value="Chromosome"/>
</dbReference>
<dbReference type="GO" id="GO:0005945">
    <property type="term" value="C:6-phosphofructokinase complex"/>
    <property type="evidence" value="ECO:0007669"/>
    <property type="project" value="TreeGrafter"/>
</dbReference>
<dbReference type="GO" id="GO:0003872">
    <property type="term" value="F:6-phosphofructokinase activity"/>
    <property type="evidence" value="ECO:0007669"/>
    <property type="project" value="UniProtKB-UniRule"/>
</dbReference>
<dbReference type="GO" id="GO:0016208">
    <property type="term" value="F:AMP binding"/>
    <property type="evidence" value="ECO:0007669"/>
    <property type="project" value="TreeGrafter"/>
</dbReference>
<dbReference type="GO" id="GO:0005524">
    <property type="term" value="F:ATP binding"/>
    <property type="evidence" value="ECO:0007669"/>
    <property type="project" value="UniProtKB-KW"/>
</dbReference>
<dbReference type="GO" id="GO:0070095">
    <property type="term" value="F:fructose-6-phosphate binding"/>
    <property type="evidence" value="ECO:0007669"/>
    <property type="project" value="TreeGrafter"/>
</dbReference>
<dbReference type="GO" id="GO:0042802">
    <property type="term" value="F:identical protein binding"/>
    <property type="evidence" value="ECO:0007669"/>
    <property type="project" value="TreeGrafter"/>
</dbReference>
<dbReference type="GO" id="GO:0046872">
    <property type="term" value="F:metal ion binding"/>
    <property type="evidence" value="ECO:0007669"/>
    <property type="project" value="UniProtKB-KW"/>
</dbReference>
<dbReference type="GO" id="GO:0048029">
    <property type="term" value="F:monosaccharide binding"/>
    <property type="evidence" value="ECO:0007669"/>
    <property type="project" value="TreeGrafter"/>
</dbReference>
<dbReference type="GO" id="GO:0061621">
    <property type="term" value="P:canonical glycolysis"/>
    <property type="evidence" value="ECO:0007669"/>
    <property type="project" value="TreeGrafter"/>
</dbReference>
<dbReference type="GO" id="GO:0030388">
    <property type="term" value="P:fructose 1,6-bisphosphate metabolic process"/>
    <property type="evidence" value="ECO:0007669"/>
    <property type="project" value="TreeGrafter"/>
</dbReference>
<dbReference type="GO" id="GO:0006002">
    <property type="term" value="P:fructose 6-phosphate metabolic process"/>
    <property type="evidence" value="ECO:0007669"/>
    <property type="project" value="InterPro"/>
</dbReference>
<dbReference type="FunFam" id="3.40.50.450:FF:000001">
    <property type="entry name" value="ATP-dependent 6-phosphofructokinase"/>
    <property type="match status" value="1"/>
</dbReference>
<dbReference type="FunFam" id="3.40.50.460:FF:000002">
    <property type="entry name" value="ATP-dependent 6-phosphofructokinase"/>
    <property type="match status" value="1"/>
</dbReference>
<dbReference type="Gene3D" id="3.40.50.450">
    <property type="match status" value="1"/>
</dbReference>
<dbReference type="Gene3D" id="3.40.50.460">
    <property type="entry name" value="Phosphofructokinase domain"/>
    <property type="match status" value="1"/>
</dbReference>
<dbReference type="HAMAP" id="MF_00339">
    <property type="entry name" value="Phosphofructokinase_I_B1"/>
    <property type="match status" value="1"/>
</dbReference>
<dbReference type="InterPro" id="IPR022953">
    <property type="entry name" value="ATP_PFK"/>
</dbReference>
<dbReference type="InterPro" id="IPR012003">
    <property type="entry name" value="ATP_PFK_prok-type"/>
</dbReference>
<dbReference type="InterPro" id="IPR012828">
    <property type="entry name" value="PFKA_ATP_prok"/>
</dbReference>
<dbReference type="InterPro" id="IPR015912">
    <property type="entry name" value="Phosphofructokinase_CS"/>
</dbReference>
<dbReference type="InterPro" id="IPR000023">
    <property type="entry name" value="Phosphofructokinase_dom"/>
</dbReference>
<dbReference type="InterPro" id="IPR035966">
    <property type="entry name" value="PKF_sf"/>
</dbReference>
<dbReference type="NCBIfam" id="TIGR02482">
    <property type="entry name" value="PFKA_ATP"/>
    <property type="match status" value="1"/>
</dbReference>
<dbReference type="NCBIfam" id="NF002872">
    <property type="entry name" value="PRK03202.1"/>
    <property type="match status" value="1"/>
</dbReference>
<dbReference type="PANTHER" id="PTHR13697:SF4">
    <property type="entry name" value="ATP-DEPENDENT 6-PHOSPHOFRUCTOKINASE"/>
    <property type="match status" value="1"/>
</dbReference>
<dbReference type="PANTHER" id="PTHR13697">
    <property type="entry name" value="PHOSPHOFRUCTOKINASE"/>
    <property type="match status" value="1"/>
</dbReference>
<dbReference type="Pfam" id="PF00365">
    <property type="entry name" value="PFK"/>
    <property type="match status" value="1"/>
</dbReference>
<dbReference type="PIRSF" id="PIRSF000532">
    <property type="entry name" value="ATP_PFK_prok"/>
    <property type="match status" value="1"/>
</dbReference>
<dbReference type="PRINTS" id="PR00476">
    <property type="entry name" value="PHFRCTKINASE"/>
</dbReference>
<dbReference type="SUPFAM" id="SSF53784">
    <property type="entry name" value="Phosphofructokinase"/>
    <property type="match status" value="1"/>
</dbReference>
<dbReference type="PROSITE" id="PS00433">
    <property type="entry name" value="PHOSPHOFRUCTOKINASE"/>
    <property type="match status" value="1"/>
</dbReference>
<proteinExistence type="inferred from homology"/>
<keyword id="KW-0021">Allosteric enzyme</keyword>
<keyword id="KW-0067">ATP-binding</keyword>
<keyword id="KW-0963">Cytoplasm</keyword>
<keyword id="KW-0324">Glycolysis</keyword>
<keyword id="KW-0418">Kinase</keyword>
<keyword id="KW-0460">Magnesium</keyword>
<keyword id="KW-0479">Metal-binding</keyword>
<keyword id="KW-0547">Nucleotide-binding</keyword>
<keyword id="KW-0808">Transferase</keyword>
<accession>Q8CS68</accession>
<organism>
    <name type="scientific">Staphylococcus epidermidis (strain ATCC 12228 / FDA PCI 1200)</name>
    <dbReference type="NCBI Taxonomy" id="176280"/>
    <lineage>
        <taxon>Bacteria</taxon>
        <taxon>Bacillati</taxon>
        <taxon>Bacillota</taxon>
        <taxon>Bacilli</taxon>
        <taxon>Bacillales</taxon>
        <taxon>Staphylococcaceae</taxon>
        <taxon>Staphylococcus</taxon>
    </lineage>
</organism>
<sequence length="322" mass="34882">MKKIAVLTSGGDSPGMNAAVRAVTRTAIYNNIEVYGVYQGYQGLLDDDIHKLELGSVGDTIQRGGTFLFSARCPQFKEEDVRKKAIENLRKRGIEGLVVIGGDGSYRGAQRISEECKEIQTIGIPGTIDNDINGTDFTIGFDTALNTIIESVDKIRDTASSHARTFIVEVMGRDCGDLALWAGLSVGAETIVLPEVNTDIKDVAEKIEQGIKRGKKHSIVMVAEGCMSGQECADELTKYINIDTRVSVLGHIQRGGSPSGADRVLASRLGGYAVELLKQGETAKGVGIRNNQLTSTPFDEIFAESDRKFNSQMYELAKELSI</sequence>
<reference key="1">
    <citation type="journal article" date="2003" name="Mol. Microbiol.">
        <title>Genome-based analysis of virulence genes in a non-biofilm-forming Staphylococcus epidermidis strain (ATCC 12228).</title>
        <authorList>
            <person name="Zhang Y.-Q."/>
            <person name="Ren S.-X."/>
            <person name="Li H.-L."/>
            <person name="Wang Y.-X."/>
            <person name="Fu G."/>
            <person name="Yang J."/>
            <person name="Qin Z.-Q."/>
            <person name="Miao Y.-G."/>
            <person name="Wang W.-Y."/>
            <person name="Chen R.-S."/>
            <person name="Shen Y."/>
            <person name="Chen Z."/>
            <person name="Yuan Z.-H."/>
            <person name="Zhao G.-P."/>
            <person name="Qu D."/>
            <person name="Danchin A."/>
            <person name="Wen Y.-M."/>
        </authorList>
    </citation>
    <scope>NUCLEOTIDE SEQUENCE [LARGE SCALE GENOMIC DNA]</scope>
    <source>
        <strain>ATCC 12228 / FDA PCI 1200</strain>
    </source>
</reference>
<gene>
    <name evidence="1" type="primary">pfkA</name>
    <name type="ordered locus">SE_1374</name>
</gene>
<name>PFKA_STAES</name>